<evidence type="ECO:0000255" key="1">
    <source>
        <dbReference type="HAMAP-Rule" id="MF_00220"/>
    </source>
</evidence>
<evidence type="ECO:0000256" key="2">
    <source>
        <dbReference type="SAM" id="MobiDB-lite"/>
    </source>
</evidence>
<comment type="function">
    <text evidence="1">Catalyzes the reversible cyclization of carbamoyl aspartate to dihydroorotate.</text>
</comment>
<comment type="catalytic activity">
    <reaction evidence="1">
        <text>(S)-dihydroorotate + H2O = N-carbamoyl-L-aspartate + H(+)</text>
        <dbReference type="Rhea" id="RHEA:24296"/>
        <dbReference type="ChEBI" id="CHEBI:15377"/>
        <dbReference type="ChEBI" id="CHEBI:15378"/>
        <dbReference type="ChEBI" id="CHEBI:30864"/>
        <dbReference type="ChEBI" id="CHEBI:32814"/>
        <dbReference type="EC" id="3.5.2.3"/>
    </reaction>
</comment>
<comment type="cofactor">
    <cofactor evidence="1">
        <name>Zn(2+)</name>
        <dbReference type="ChEBI" id="CHEBI:29105"/>
    </cofactor>
    <text evidence="1">Binds 2 Zn(2+) ions per subunit.</text>
</comment>
<comment type="pathway">
    <text evidence="1">Pyrimidine metabolism; UMP biosynthesis via de novo pathway; (S)-dihydroorotate from bicarbonate: step 3/3.</text>
</comment>
<comment type="similarity">
    <text evidence="1">Belongs to the metallo-dependent hydrolases superfamily. DHOase family. Class I DHOase subfamily.</text>
</comment>
<sequence>MPDIHIKNTRIYYNNSLRPAEILIENGKITKIGKDFRVSSSDMVIDAEGALTLPAGIDVHVHFREPGMTLKENWYTGSCAAAAGGIATVIDQPNTIPPTTDRRSFEQKLKLARKKSIVDFGINGGVTGNIEKLRELWRLGVTAFGEIFMAESTGGLNINEETFEEALAEIKKLGALATIHAEDEKMRLELEQLLKGDVSYDYHSKVRPNACEASAVQSALELISRLQVRAHFCHLSTLEAVGMIRKEKYLAKRENKKPLFTCEVTPHHLFLSAKDWERLRAFGKMNPPLRGSHSIKALVNGLNDGTIDMVASDHAPHLESEKDLDIRAAPSGVPGVETLMPLMLAAVRKNILPLSQMIMVTSWNPAKAFGLDRLGKGWLEVGFDADLMIVDPRNLQPIRADMLHSKAGWTPFEGMDAVFPEYTLSRGEVIWMEDSINAKPGRGEFLEGSGKRSEEDEEENSEETGSD</sequence>
<accession>Q8TSA6</accession>
<name>PYRC_METAC</name>
<organism>
    <name type="scientific">Methanosarcina acetivorans (strain ATCC 35395 / DSM 2834 / JCM 12185 / C2A)</name>
    <dbReference type="NCBI Taxonomy" id="188937"/>
    <lineage>
        <taxon>Archaea</taxon>
        <taxon>Methanobacteriati</taxon>
        <taxon>Methanobacteriota</taxon>
        <taxon>Stenosarchaea group</taxon>
        <taxon>Methanomicrobia</taxon>
        <taxon>Methanosarcinales</taxon>
        <taxon>Methanosarcinaceae</taxon>
        <taxon>Methanosarcina</taxon>
    </lineage>
</organism>
<keyword id="KW-0378">Hydrolase</keyword>
<keyword id="KW-0479">Metal-binding</keyword>
<keyword id="KW-0665">Pyrimidine biosynthesis</keyword>
<keyword id="KW-1185">Reference proteome</keyword>
<keyword id="KW-0862">Zinc</keyword>
<feature type="chain" id="PRO_0000147269" description="Dihydroorotase">
    <location>
        <begin position="1"/>
        <end position="467"/>
    </location>
</feature>
<feature type="region of interest" description="Disordered" evidence="2">
    <location>
        <begin position="439"/>
        <end position="467"/>
    </location>
</feature>
<feature type="compositionally biased region" description="Basic and acidic residues" evidence="2">
    <location>
        <begin position="441"/>
        <end position="454"/>
    </location>
</feature>
<feature type="compositionally biased region" description="Acidic residues" evidence="2">
    <location>
        <begin position="455"/>
        <end position="467"/>
    </location>
</feature>
<feature type="active site" evidence="1">
    <location>
        <position position="313"/>
    </location>
</feature>
<feature type="binding site" evidence="1">
    <location>
        <position position="60"/>
    </location>
    <ligand>
        <name>Zn(2+)</name>
        <dbReference type="ChEBI" id="CHEBI:29105"/>
        <label>1</label>
    </ligand>
</feature>
<feature type="binding site" evidence="1">
    <location>
        <begin position="62"/>
        <end position="64"/>
    </location>
    <ligand>
        <name>substrate</name>
    </ligand>
</feature>
<feature type="binding site" evidence="1">
    <location>
        <position position="62"/>
    </location>
    <ligand>
        <name>Zn(2+)</name>
        <dbReference type="ChEBI" id="CHEBI:29105"/>
        <label>1</label>
    </ligand>
</feature>
<feature type="binding site" evidence="1">
    <location>
        <position position="94"/>
    </location>
    <ligand>
        <name>substrate</name>
    </ligand>
</feature>
<feature type="binding site" evidence="1">
    <location>
        <position position="146"/>
    </location>
    <ligand>
        <name>Zn(2+)</name>
        <dbReference type="ChEBI" id="CHEBI:29105"/>
        <label>1</label>
    </ligand>
</feature>
<feature type="binding site" evidence="1">
    <location>
        <position position="146"/>
    </location>
    <ligand>
        <name>Zn(2+)</name>
        <dbReference type="ChEBI" id="CHEBI:29105"/>
        <label>2</label>
    </ligand>
</feature>
<feature type="binding site" evidence="1">
    <location>
        <position position="180"/>
    </location>
    <ligand>
        <name>Zn(2+)</name>
        <dbReference type="ChEBI" id="CHEBI:29105"/>
        <label>2</label>
    </ligand>
</feature>
<feature type="binding site" evidence="1">
    <location>
        <position position="234"/>
    </location>
    <ligand>
        <name>Zn(2+)</name>
        <dbReference type="ChEBI" id="CHEBI:29105"/>
        <label>2</label>
    </ligand>
</feature>
<feature type="binding site" evidence="1">
    <location>
        <position position="313"/>
    </location>
    <ligand>
        <name>Zn(2+)</name>
        <dbReference type="ChEBI" id="CHEBI:29105"/>
        <label>1</label>
    </ligand>
</feature>
<feature type="binding site" evidence="1">
    <location>
        <position position="317"/>
    </location>
    <ligand>
        <name>substrate</name>
    </ligand>
</feature>
<protein>
    <recommendedName>
        <fullName evidence="1">Dihydroorotase</fullName>
        <shortName evidence="1">DHOase</shortName>
        <ecNumber evidence="1">3.5.2.3</ecNumber>
    </recommendedName>
</protein>
<dbReference type="EC" id="3.5.2.3" evidence="1"/>
<dbReference type="EMBL" id="AE010299">
    <property type="protein sequence ID" value="AAM04331.1"/>
    <property type="molecule type" value="Genomic_DNA"/>
</dbReference>
<dbReference type="RefSeq" id="WP_011020936.1">
    <property type="nucleotide sequence ID" value="NC_003552.1"/>
</dbReference>
<dbReference type="SMR" id="Q8TSA6"/>
<dbReference type="FunCoup" id="Q8TSA6">
    <property type="interactions" value="104"/>
</dbReference>
<dbReference type="STRING" id="188937.MA_0892"/>
<dbReference type="EnsemblBacteria" id="AAM04331">
    <property type="protein sequence ID" value="AAM04331"/>
    <property type="gene ID" value="MA_0892"/>
</dbReference>
<dbReference type="GeneID" id="1472784"/>
<dbReference type="KEGG" id="mac:MA_0892"/>
<dbReference type="HOGENOM" id="CLU_015572_1_1_2"/>
<dbReference type="InParanoid" id="Q8TSA6"/>
<dbReference type="OrthoDB" id="50279at2157"/>
<dbReference type="PhylomeDB" id="Q8TSA6"/>
<dbReference type="UniPathway" id="UPA00070">
    <property type="reaction ID" value="UER00117"/>
</dbReference>
<dbReference type="Proteomes" id="UP000002487">
    <property type="component" value="Chromosome"/>
</dbReference>
<dbReference type="GO" id="GO:0005737">
    <property type="term" value="C:cytoplasm"/>
    <property type="evidence" value="ECO:0000318"/>
    <property type="project" value="GO_Central"/>
</dbReference>
<dbReference type="GO" id="GO:0004038">
    <property type="term" value="F:allantoinase activity"/>
    <property type="evidence" value="ECO:0000318"/>
    <property type="project" value="GO_Central"/>
</dbReference>
<dbReference type="GO" id="GO:0004151">
    <property type="term" value="F:dihydroorotase activity"/>
    <property type="evidence" value="ECO:0007669"/>
    <property type="project" value="UniProtKB-UniRule"/>
</dbReference>
<dbReference type="GO" id="GO:0008270">
    <property type="term" value="F:zinc ion binding"/>
    <property type="evidence" value="ECO:0007669"/>
    <property type="project" value="UniProtKB-UniRule"/>
</dbReference>
<dbReference type="GO" id="GO:0044205">
    <property type="term" value="P:'de novo' UMP biosynthetic process"/>
    <property type="evidence" value="ECO:0007669"/>
    <property type="project" value="UniProtKB-UniRule"/>
</dbReference>
<dbReference type="GO" id="GO:0006145">
    <property type="term" value="P:purine nucleobase catabolic process"/>
    <property type="evidence" value="ECO:0000318"/>
    <property type="project" value="GO_Central"/>
</dbReference>
<dbReference type="CDD" id="cd01318">
    <property type="entry name" value="DHOase_IIb"/>
    <property type="match status" value="1"/>
</dbReference>
<dbReference type="FunFam" id="3.20.20.140:FF:000174">
    <property type="entry name" value="Dihydropyrimidinase-related protein 2"/>
    <property type="match status" value="1"/>
</dbReference>
<dbReference type="Gene3D" id="3.20.20.140">
    <property type="entry name" value="Metal-dependent hydrolases"/>
    <property type="match status" value="1"/>
</dbReference>
<dbReference type="Gene3D" id="2.30.40.10">
    <property type="entry name" value="Urease, subunit C, domain 1"/>
    <property type="match status" value="1"/>
</dbReference>
<dbReference type="HAMAP" id="MF_00220_A">
    <property type="entry name" value="PyrC_classI_A"/>
    <property type="match status" value="1"/>
</dbReference>
<dbReference type="InterPro" id="IPR006680">
    <property type="entry name" value="Amidohydro-rel"/>
</dbReference>
<dbReference type="InterPro" id="IPR004722">
    <property type="entry name" value="DHOase"/>
</dbReference>
<dbReference type="InterPro" id="IPR050138">
    <property type="entry name" value="DHOase/Allantoinase_Hydrolase"/>
</dbReference>
<dbReference type="InterPro" id="IPR002195">
    <property type="entry name" value="Dihydroorotase_CS"/>
</dbReference>
<dbReference type="InterPro" id="IPR011059">
    <property type="entry name" value="Metal-dep_hydrolase_composite"/>
</dbReference>
<dbReference type="InterPro" id="IPR032466">
    <property type="entry name" value="Metal_Hydrolase"/>
</dbReference>
<dbReference type="NCBIfam" id="NF002668">
    <property type="entry name" value="PRK02382.1"/>
    <property type="match status" value="1"/>
</dbReference>
<dbReference type="NCBIfam" id="TIGR00857">
    <property type="entry name" value="pyrC_multi"/>
    <property type="match status" value="1"/>
</dbReference>
<dbReference type="PANTHER" id="PTHR43668">
    <property type="entry name" value="ALLANTOINASE"/>
    <property type="match status" value="1"/>
</dbReference>
<dbReference type="PANTHER" id="PTHR43668:SF2">
    <property type="entry name" value="ALLANTOINASE"/>
    <property type="match status" value="1"/>
</dbReference>
<dbReference type="Pfam" id="PF01979">
    <property type="entry name" value="Amidohydro_1"/>
    <property type="match status" value="1"/>
</dbReference>
<dbReference type="SUPFAM" id="SSF51338">
    <property type="entry name" value="Composite domain of metallo-dependent hydrolases"/>
    <property type="match status" value="1"/>
</dbReference>
<dbReference type="SUPFAM" id="SSF51556">
    <property type="entry name" value="Metallo-dependent hydrolases"/>
    <property type="match status" value="1"/>
</dbReference>
<dbReference type="PROSITE" id="PS00482">
    <property type="entry name" value="DIHYDROOROTASE_1"/>
    <property type="match status" value="1"/>
</dbReference>
<dbReference type="PROSITE" id="PS00483">
    <property type="entry name" value="DIHYDROOROTASE_2"/>
    <property type="match status" value="1"/>
</dbReference>
<proteinExistence type="inferred from homology"/>
<reference key="1">
    <citation type="journal article" date="2002" name="Genome Res.">
        <title>The genome of Methanosarcina acetivorans reveals extensive metabolic and physiological diversity.</title>
        <authorList>
            <person name="Galagan J.E."/>
            <person name="Nusbaum C."/>
            <person name="Roy A."/>
            <person name="Endrizzi M.G."/>
            <person name="Macdonald P."/>
            <person name="FitzHugh W."/>
            <person name="Calvo S."/>
            <person name="Engels R."/>
            <person name="Smirnov S."/>
            <person name="Atnoor D."/>
            <person name="Brown A."/>
            <person name="Allen N."/>
            <person name="Naylor J."/>
            <person name="Stange-Thomann N."/>
            <person name="DeArellano K."/>
            <person name="Johnson R."/>
            <person name="Linton L."/>
            <person name="McEwan P."/>
            <person name="McKernan K."/>
            <person name="Talamas J."/>
            <person name="Tirrell A."/>
            <person name="Ye W."/>
            <person name="Zimmer A."/>
            <person name="Barber R.D."/>
            <person name="Cann I."/>
            <person name="Graham D.E."/>
            <person name="Grahame D.A."/>
            <person name="Guss A.M."/>
            <person name="Hedderich R."/>
            <person name="Ingram-Smith C."/>
            <person name="Kuettner H.C."/>
            <person name="Krzycki J.A."/>
            <person name="Leigh J.A."/>
            <person name="Li W."/>
            <person name="Liu J."/>
            <person name="Mukhopadhyay B."/>
            <person name="Reeve J.N."/>
            <person name="Smith K."/>
            <person name="Springer T.A."/>
            <person name="Umayam L.A."/>
            <person name="White O."/>
            <person name="White R.H."/>
            <person name="de Macario E.C."/>
            <person name="Ferry J.G."/>
            <person name="Jarrell K.F."/>
            <person name="Jing H."/>
            <person name="Macario A.J.L."/>
            <person name="Paulsen I.T."/>
            <person name="Pritchett M."/>
            <person name="Sowers K.R."/>
            <person name="Swanson R.V."/>
            <person name="Zinder S.H."/>
            <person name="Lander E."/>
            <person name="Metcalf W.W."/>
            <person name="Birren B."/>
        </authorList>
    </citation>
    <scope>NUCLEOTIDE SEQUENCE [LARGE SCALE GENOMIC DNA]</scope>
    <source>
        <strain>ATCC 35395 / DSM 2834 / JCM 12185 / C2A</strain>
    </source>
</reference>
<gene>
    <name evidence="1" type="primary">pyrC</name>
    <name type="ordered locus">MA_0892</name>
</gene>